<protein>
    <recommendedName>
        <fullName>Pigment production hydroxylase</fullName>
        <ecNumber>1.-.-.-</ecNumber>
    </recommendedName>
</protein>
<proteinExistence type="predicted"/>
<keyword id="KW-0560">Oxidoreductase</keyword>
<keyword id="KW-0608">Pigment</keyword>
<organism>
    <name type="scientific">Rhodococcus sp. (strain ATCC 21145)</name>
    <dbReference type="NCBI Taxonomy" id="79678"/>
    <lineage>
        <taxon>Bacteria</taxon>
        <taxon>Bacillati</taxon>
        <taxon>Actinomycetota</taxon>
        <taxon>Actinomycetes</taxon>
        <taxon>Mycobacteriales</taxon>
        <taxon>Nocardiaceae</taxon>
        <taxon>Rhodococcus</taxon>
    </lineage>
</organism>
<accession>P26698</accession>
<dbReference type="EC" id="1.-.-.-"/>
<dbReference type="EMBL" id="M55641">
    <property type="protein sequence ID" value="AAA26187.1"/>
    <property type="molecule type" value="Genomic_DNA"/>
</dbReference>
<dbReference type="PIR" id="A45827">
    <property type="entry name" value="A45827"/>
</dbReference>
<dbReference type="SMR" id="P26698"/>
<dbReference type="GO" id="GO:0003995">
    <property type="term" value="F:acyl-CoA dehydrogenase activity"/>
    <property type="evidence" value="ECO:0007669"/>
    <property type="project" value="TreeGrafter"/>
</dbReference>
<dbReference type="GO" id="GO:0050660">
    <property type="term" value="F:flavin adenine dinucleotide binding"/>
    <property type="evidence" value="ECO:0007669"/>
    <property type="project" value="InterPro"/>
</dbReference>
<dbReference type="GO" id="GO:0031409">
    <property type="term" value="F:pigment binding"/>
    <property type="evidence" value="ECO:0007669"/>
    <property type="project" value="UniProtKB-KW"/>
</dbReference>
<dbReference type="Gene3D" id="1.10.540.10">
    <property type="entry name" value="Acyl-CoA dehydrogenase/oxidase, N-terminal domain"/>
    <property type="match status" value="1"/>
</dbReference>
<dbReference type="Gene3D" id="2.40.110.10">
    <property type="entry name" value="Butyryl-CoA Dehydrogenase, subunit A, domain 2"/>
    <property type="match status" value="1"/>
</dbReference>
<dbReference type="Gene3D" id="1.20.140.10">
    <property type="entry name" value="Butyryl-CoA Dehydrogenase, subunit A, domain 3"/>
    <property type="match status" value="1"/>
</dbReference>
<dbReference type="InterPro" id="IPR013107">
    <property type="entry name" value="Acyl-CoA_DH_C"/>
</dbReference>
<dbReference type="InterPro" id="IPR046373">
    <property type="entry name" value="Acyl-CoA_Oxase/DH_mid-dom_sf"/>
</dbReference>
<dbReference type="InterPro" id="IPR036250">
    <property type="entry name" value="AcylCo_DH-like_C"/>
</dbReference>
<dbReference type="InterPro" id="IPR013786">
    <property type="entry name" value="AcylCoA_DH/ox_N"/>
</dbReference>
<dbReference type="InterPro" id="IPR037069">
    <property type="entry name" value="AcylCoA_DH/ox_N_sf"/>
</dbReference>
<dbReference type="InterPro" id="IPR009100">
    <property type="entry name" value="AcylCoA_DH/oxidase_NM_dom_sf"/>
</dbReference>
<dbReference type="PANTHER" id="PTHR43884">
    <property type="entry name" value="ACYL-COA DEHYDROGENASE"/>
    <property type="match status" value="1"/>
</dbReference>
<dbReference type="PANTHER" id="PTHR43884:SF12">
    <property type="entry name" value="ISOVALERYL-COA DEHYDROGENASE, MITOCHONDRIAL-RELATED"/>
    <property type="match status" value="1"/>
</dbReference>
<dbReference type="Pfam" id="PF08028">
    <property type="entry name" value="Acyl-CoA_dh_2"/>
    <property type="match status" value="1"/>
</dbReference>
<dbReference type="Pfam" id="PF02771">
    <property type="entry name" value="Acyl-CoA_dh_N"/>
    <property type="match status" value="1"/>
</dbReference>
<dbReference type="PIRSF" id="PIRSF016578">
    <property type="entry name" value="HsaA"/>
    <property type="match status" value="1"/>
</dbReference>
<dbReference type="SUPFAM" id="SSF47203">
    <property type="entry name" value="Acyl-CoA dehydrogenase C-terminal domain-like"/>
    <property type="match status" value="1"/>
</dbReference>
<dbReference type="SUPFAM" id="SSF56645">
    <property type="entry name" value="Acyl-CoA dehydrogenase NM domain-like"/>
    <property type="match status" value="1"/>
</dbReference>
<sequence>MDITRTELMDRVHALVPAFAERAQKTEENRAPLDETITDLIDSGILATLTPKEYGGLELGLDVAADIVRTISAVCPSTGWVTSFYIGAAWRVNIFTEQAQREVFADKPYTLTAGTAAPLGQVQKVDGGYRITGQTAWNSGSVHAEWFTFAGVVFEEGSAPTPLWFLVPREDVKVLDTWYIAGMSGTGSNDISVDDVFVPEYRTGPFALALAGTAPGQLIHPNPMYHLPFLPFAMAEVTPVVVGALRGAADAFVQRTKDRQGTISQEKASGKQAAQMRLGRALAAADAAETLLDAFFERLTAQRPEQSDPRDRAEMKLKAAYLADLARNALNDMVRGIGGDGYRNSAPIQRYFRDLSVLSVHAFLDIDTASETIGRFTLDLPVSDPLL</sequence>
<comment type="function">
    <text>Gives rise to a blue or pink color to bacterial colonies. May have hydroxylase activity, resulting in the observed pigment production.</text>
</comment>
<reference key="1">
    <citation type="journal article" date="1990" name="J. Gen. Microbiol.">
        <title>Structure of a Rhodococcus gene encoding pigment production in Escherichia coli.</title>
        <authorList>
            <person name="Hart S."/>
            <person name="Kirby R."/>
            <person name="Woods D.R."/>
        </authorList>
    </citation>
    <scope>NUCLEOTIDE SEQUENCE [GENOMIC DNA]</scope>
</reference>
<name>PIGM_RHOST</name>
<feature type="chain" id="PRO_0000058437" description="Pigment production hydroxylase">
    <location>
        <begin position="1"/>
        <end position="387"/>
    </location>
</feature>